<reference key="1">
    <citation type="journal article" date="1998" name="Biochim. Biophys. Acta">
        <title>Six isoforms of cardiotoxin in malayan spitting cobra (Naja naja sputatrix) venom: cloning and characterization of cDNAs.</title>
        <authorList>
            <person name="Jeyaseelan K."/>
            <person name="Armugam A."/>
            <person name="Lachumanan R."/>
            <person name="Tan C.H."/>
            <person name="Tan N.H."/>
        </authorList>
    </citation>
    <scope>NUCLEOTIDE SEQUENCE [MRNA]</scope>
    <source>
        <tissue>Venom gland</tissue>
    </source>
</reference>
<name>3SA5B_NAJSP</name>
<proteinExistence type="inferred from homology"/>
<dbReference type="EMBL" id="U86597">
    <property type="protein sequence ID" value="AAC27692.1"/>
    <property type="molecule type" value="mRNA"/>
</dbReference>
<dbReference type="SMR" id="P60310"/>
<dbReference type="GO" id="GO:0005576">
    <property type="term" value="C:extracellular region"/>
    <property type="evidence" value="ECO:0007669"/>
    <property type="project" value="UniProtKB-SubCell"/>
</dbReference>
<dbReference type="GO" id="GO:0016020">
    <property type="term" value="C:membrane"/>
    <property type="evidence" value="ECO:0007669"/>
    <property type="project" value="UniProtKB-KW"/>
</dbReference>
<dbReference type="GO" id="GO:0044218">
    <property type="term" value="C:other organism cell membrane"/>
    <property type="evidence" value="ECO:0007669"/>
    <property type="project" value="UniProtKB-KW"/>
</dbReference>
<dbReference type="GO" id="GO:0090729">
    <property type="term" value="F:toxin activity"/>
    <property type="evidence" value="ECO:0007669"/>
    <property type="project" value="UniProtKB-KW"/>
</dbReference>
<dbReference type="GO" id="GO:0031640">
    <property type="term" value="P:killing of cells of another organism"/>
    <property type="evidence" value="ECO:0007669"/>
    <property type="project" value="UniProtKB-KW"/>
</dbReference>
<dbReference type="CDD" id="cd00206">
    <property type="entry name" value="TFP_snake_toxin"/>
    <property type="match status" value="1"/>
</dbReference>
<dbReference type="FunFam" id="2.10.60.10:FF:000024">
    <property type="entry name" value="Cytotoxin 1"/>
    <property type="match status" value="1"/>
</dbReference>
<dbReference type="Gene3D" id="2.10.60.10">
    <property type="entry name" value="CD59"/>
    <property type="match status" value="1"/>
</dbReference>
<dbReference type="InterPro" id="IPR003572">
    <property type="entry name" value="Cytotoxin_Cobra"/>
</dbReference>
<dbReference type="InterPro" id="IPR003571">
    <property type="entry name" value="Snake_3FTx"/>
</dbReference>
<dbReference type="InterPro" id="IPR045860">
    <property type="entry name" value="Snake_toxin-like_sf"/>
</dbReference>
<dbReference type="InterPro" id="IPR018354">
    <property type="entry name" value="Snake_toxin_con_site"/>
</dbReference>
<dbReference type="InterPro" id="IPR054131">
    <property type="entry name" value="Toxin_cobra-type"/>
</dbReference>
<dbReference type="Pfam" id="PF21947">
    <property type="entry name" value="Toxin_cobra-type"/>
    <property type="match status" value="1"/>
</dbReference>
<dbReference type="PRINTS" id="PR00282">
    <property type="entry name" value="CYTOTOXIN"/>
</dbReference>
<dbReference type="SUPFAM" id="SSF57302">
    <property type="entry name" value="Snake toxin-like"/>
    <property type="match status" value="1"/>
</dbReference>
<dbReference type="PROSITE" id="PS00272">
    <property type="entry name" value="SNAKE_TOXIN"/>
    <property type="match status" value="1"/>
</dbReference>
<accession>P60310</accession>
<keyword id="KW-0123">Cardiotoxin</keyword>
<keyword id="KW-0204">Cytolysis</keyword>
<keyword id="KW-1015">Disulfide bond</keyword>
<keyword id="KW-0472">Membrane</keyword>
<keyword id="KW-0964">Secreted</keyword>
<keyword id="KW-0732">Signal</keyword>
<keyword id="KW-1052">Target cell membrane</keyword>
<keyword id="KW-1053">Target membrane</keyword>
<keyword id="KW-0800">Toxin</keyword>
<comment type="function">
    <text evidence="2 3">Shows cytolytic activity on many different cells by forming pore in lipid membranes. In vivo, increases heart rate or kills the animal by cardiac arrest. In addition, it binds to heparin with high affinity, interacts with Kv channel-interacting protein 1 (KCNIP1) in a calcium-independent manner, and binds to integrin alpha-V/beta-3 (ITGAV/ITGB3) with moderate affinity.</text>
</comment>
<comment type="subunit">
    <text evidence="2">Monomer in solution; Homodimer and oligomer in the presence of negatively charged lipids forming a pore with a size ranging between 20 and 30 Angstroms.</text>
</comment>
<comment type="subcellular location">
    <subcellularLocation>
        <location evidence="1">Secreted</location>
    </subcellularLocation>
    <subcellularLocation>
        <location evidence="2">Target cell membrane</location>
    </subcellularLocation>
</comment>
<comment type="tissue specificity">
    <text evidence="4">Expressed by the venom gland.</text>
</comment>
<comment type="miscellaneous">
    <text evidence="4">Is classified as a S-type cytotoxin, since a serine residue stands at position 49 (Ser-29 in standard classification).</text>
</comment>
<comment type="similarity">
    <text evidence="4">Belongs to the three-finger toxin family. Short-chain subfamily. Type IA cytotoxin sub-subfamily.</text>
</comment>
<sequence length="81" mass="9055">MKTLLLTLLVVTIVCLDLGYTLKCNKLVPLFYKTCPAGKNLCYKMFMVSNLTVPVKRGCIDVCPKNSALVKYVCCNTDRCN</sequence>
<organism>
    <name type="scientific">Naja sputatrix</name>
    <name type="common">Malayan spitting cobra</name>
    <name type="synonym">Naja naja sputatrix</name>
    <dbReference type="NCBI Taxonomy" id="33626"/>
    <lineage>
        <taxon>Eukaryota</taxon>
        <taxon>Metazoa</taxon>
        <taxon>Chordata</taxon>
        <taxon>Craniata</taxon>
        <taxon>Vertebrata</taxon>
        <taxon>Euteleostomi</taxon>
        <taxon>Lepidosauria</taxon>
        <taxon>Squamata</taxon>
        <taxon>Bifurcata</taxon>
        <taxon>Unidentata</taxon>
        <taxon>Episquamata</taxon>
        <taxon>Toxicofera</taxon>
        <taxon>Serpentes</taxon>
        <taxon>Colubroidea</taxon>
        <taxon>Elapidae</taxon>
        <taxon>Elapinae</taxon>
        <taxon>Naja</taxon>
    </lineage>
</organism>
<feature type="signal peptide" evidence="1">
    <location>
        <begin position="1"/>
        <end position="21"/>
    </location>
</feature>
<feature type="chain" id="PRO_0000035401" description="Cytotoxin 5b">
    <location>
        <begin position="22"/>
        <end position="81"/>
    </location>
</feature>
<feature type="disulfide bond" evidence="2">
    <location>
        <begin position="24"/>
        <end position="42"/>
    </location>
</feature>
<feature type="disulfide bond" evidence="2">
    <location>
        <begin position="35"/>
        <end position="59"/>
    </location>
</feature>
<feature type="disulfide bond" evidence="2">
    <location>
        <begin position="63"/>
        <end position="74"/>
    </location>
</feature>
<feature type="disulfide bond" evidence="2">
    <location>
        <begin position="75"/>
        <end position="80"/>
    </location>
</feature>
<protein>
    <recommendedName>
        <fullName>Cytotoxin 5b</fullName>
    </recommendedName>
    <alternativeName>
        <fullName>Cardiotoxin 5b</fullName>
        <shortName>CTX-5b</shortName>
        <shortName>Ctx5b</shortName>
    </alternativeName>
</protein>
<evidence type="ECO:0000250" key="1"/>
<evidence type="ECO:0000250" key="2">
    <source>
        <dbReference type="UniProtKB" id="P60301"/>
    </source>
</evidence>
<evidence type="ECO:0000250" key="3">
    <source>
        <dbReference type="UniProtKB" id="P60304"/>
    </source>
</evidence>
<evidence type="ECO:0000305" key="4"/>